<protein>
    <recommendedName>
        <fullName evidence="1">Large ribosomal subunit protein bL31</fullName>
    </recommendedName>
    <alternativeName>
        <fullName evidence="2">50S ribosomal protein L31</fullName>
    </alternativeName>
</protein>
<organism>
    <name type="scientific">Mycobacterium avium (strain 104)</name>
    <dbReference type="NCBI Taxonomy" id="243243"/>
    <lineage>
        <taxon>Bacteria</taxon>
        <taxon>Bacillati</taxon>
        <taxon>Actinomycetota</taxon>
        <taxon>Actinomycetes</taxon>
        <taxon>Mycobacteriales</taxon>
        <taxon>Mycobacteriaceae</taxon>
        <taxon>Mycobacterium</taxon>
        <taxon>Mycobacterium avium complex (MAC)</taxon>
    </lineage>
</organism>
<accession>A0QCW6</accession>
<sequence>MKADIHPTYAETTVLCGCGNTFQTRSTKDGGRIVVEVCSQCHPFYTGKQKILDSGGRVARFEKRYGKRKAGAEKAESADK</sequence>
<comment type="function">
    <text evidence="1">Binds the 23S rRNA.</text>
</comment>
<comment type="cofactor">
    <cofactor evidence="1">
        <name>Zn(2+)</name>
        <dbReference type="ChEBI" id="CHEBI:29105"/>
    </cofactor>
    <text evidence="1">Binds 1 zinc ion per subunit.</text>
</comment>
<comment type="subunit">
    <text evidence="1">Part of the 50S ribosomal subunit.</text>
</comment>
<comment type="similarity">
    <text evidence="1">Belongs to the bacterial ribosomal protein bL31 family. Type A subfamily.</text>
</comment>
<feature type="chain" id="PRO_1000126660" description="Large ribosomal subunit protein bL31">
    <location>
        <begin position="1"/>
        <end position="80"/>
    </location>
</feature>
<feature type="binding site" evidence="1">
    <location>
        <position position="16"/>
    </location>
    <ligand>
        <name>Zn(2+)</name>
        <dbReference type="ChEBI" id="CHEBI:29105"/>
    </ligand>
</feature>
<feature type="binding site" evidence="1">
    <location>
        <position position="18"/>
    </location>
    <ligand>
        <name>Zn(2+)</name>
        <dbReference type="ChEBI" id="CHEBI:29105"/>
    </ligand>
</feature>
<feature type="binding site" evidence="1">
    <location>
        <position position="38"/>
    </location>
    <ligand>
        <name>Zn(2+)</name>
        <dbReference type="ChEBI" id="CHEBI:29105"/>
    </ligand>
</feature>
<feature type="binding site" evidence="1">
    <location>
        <position position="41"/>
    </location>
    <ligand>
        <name>Zn(2+)</name>
        <dbReference type="ChEBI" id="CHEBI:29105"/>
    </ligand>
</feature>
<proteinExistence type="inferred from homology"/>
<gene>
    <name evidence="1" type="primary">rpmE</name>
    <name type="ordered locus">MAV_1515</name>
</gene>
<dbReference type="EMBL" id="CP000479">
    <property type="protein sequence ID" value="ABK67638.1"/>
    <property type="molecule type" value="Genomic_DNA"/>
</dbReference>
<dbReference type="RefSeq" id="WP_003873232.1">
    <property type="nucleotide sequence ID" value="NC_008595.1"/>
</dbReference>
<dbReference type="SMR" id="A0QCW6"/>
<dbReference type="GeneID" id="75269277"/>
<dbReference type="KEGG" id="mav:MAV_1515"/>
<dbReference type="HOGENOM" id="CLU_114306_4_0_11"/>
<dbReference type="Proteomes" id="UP000001574">
    <property type="component" value="Chromosome"/>
</dbReference>
<dbReference type="GO" id="GO:1990904">
    <property type="term" value="C:ribonucleoprotein complex"/>
    <property type="evidence" value="ECO:0007669"/>
    <property type="project" value="UniProtKB-KW"/>
</dbReference>
<dbReference type="GO" id="GO:0005840">
    <property type="term" value="C:ribosome"/>
    <property type="evidence" value="ECO:0007669"/>
    <property type="project" value="UniProtKB-KW"/>
</dbReference>
<dbReference type="GO" id="GO:0046872">
    <property type="term" value="F:metal ion binding"/>
    <property type="evidence" value="ECO:0007669"/>
    <property type="project" value="UniProtKB-KW"/>
</dbReference>
<dbReference type="GO" id="GO:0019843">
    <property type="term" value="F:rRNA binding"/>
    <property type="evidence" value="ECO:0007669"/>
    <property type="project" value="UniProtKB-KW"/>
</dbReference>
<dbReference type="GO" id="GO:0003735">
    <property type="term" value="F:structural constituent of ribosome"/>
    <property type="evidence" value="ECO:0007669"/>
    <property type="project" value="InterPro"/>
</dbReference>
<dbReference type="GO" id="GO:0006412">
    <property type="term" value="P:translation"/>
    <property type="evidence" value="ECO:0007669"/>
    <property type="project" value="UniProtKB-UniRule"/>
</dbReference>
<dbReference type="Gene3D" id="4.10.830.30">
    <property type="entry name" value="Ribosomal protein L31"/>
    <property type="match status" value="1"/>
</dbReference>
<dbReference type="HAMAP" id="MF_00501">
    <property type="entry name" value="Ribosomal_bL31_1"/>
    <property type="match status" value="1"/>
</dbReference>
<dbReference type="InterPro" id="IPR034704">
    <property type="entry name" value="Ribosomal_bL28/bL31-like_sf"/>
</dbReference>
<dbReference type="InterPro" id="IPR002150">
    <property type="entry name" value="Ribosomal_bL31"/>
</dbReference>
<dbReference type="InterPro" id="IPR027491">
    <property type="entry name" value="Ribosomal_bL31_A"/>
</dbReference>
<dbReference type="InterPro" id="IPR042105">
    <property type="entry name" value="Ribosomal_bL31_sf"/>
</dbReference>
<dbReference type="NCBIfam" id="TIGR00105">
    <property type="entry name" value="L31"/>
    <property type="match status" value="1"/>
</dbReference>
<dbReference type="NCBIfam" id="NF000612">
    <property type="entry name" value="PRK00019.1"/>
    <property type="match status" value="1"/>
</dbReference>
<dbReference type="NCBIfam" id="NF001809">
    <property type="entry name" value="PRK00528.1"/>
    <property type="match status" value="1"/>
</dbReference>
<dbReference type="PANTHER" id="PTHR33280">
    <property type="entry name" value="50S RIBOSOMAL PROTEIN L31, CHLOROPLASTIC"/>
    <property type="match status" value="1"/>
</dbReference>
<dbReference type="PANTHER" id="PTHR33280:SF1">
    <property type="entry name" value="LARGE RIBOSOMAL SUBUNIT PROTEIN BL31C"/>
    <property type="match status" value="1"/>
</dbReference>
<dbReference type="Pfam" id="PF01197">
    <property type="entry name" value="Ribosomal_L31"/>
    <property type="match status" value="1"/>
</dbReference>
<dbReference type="PRINTS" id="PR01249">
    <property type="entry name" value="RIBOSOMALL31"/>
</dbReference>
<dbReference type="SUPFAM" id="SSF143800">
    <property type="entry name" value="L28p-like"/>
    <property type="match status" value="1"/>
</dbReference>
<dbReference type="PROSITE" id="PS01143">
    <property type="entry name" value="RIBOSOMAL_L31"/>
    <property type="match status" value="1"/>
</dbReference>
<keyword id="KW-0479">Metal-binding</keyword>
<keyword id="KW-0687">Ribonucleoprotein</keyword>
<keyword id="KW-0689">Ribosomal protein</keyword>
<keyword id="KW-0694">RNA-binding</keyword>
<keyword id="KW-0699">rRNA-binding</keyword>
<keyword id="KW-0862">Zinc</keyword>
<name>RL31_MYCA1</name>
<evidence type="ECO:0000255" key="1">
    <source>
        <dbReference type="HAMAP-Rule" id="MF_00501"/>
    </source>
</evidence>
<evidence type="ECO:0000305" key="2"/>
<reference key="1">
    <citation type="submission" date="2006-10" db="EMBL/GenBank/DDBJ databases">
        <authorList>
            <person name="Fleischmann R.D."/>
            <person name="Dodson R.J."/>
            <person name="Haft D.H."/>
            <person name="Merkel J.S."/>
            <person name="Nelson W.C."/>
            <person name="Fraser C.M."/>
        </authorList>
    </citation>
    <scope>NUCLEOTIDE SEQUENCE [LARGE SCALE GENOMIC DNA]</scope>
    <source>
        <strain>104</strain>
    </source>
</reference>